<accession>P62114</accession>
<accession>P12172</accession>
<protein>
    <recommendedName>
        <fullName evidence="3">Photosystem biogenesis factor 1</fullName>
    </recommendedName>
    <alternativeName>
        <fullName evidence="1">Protein PsbN</fullName>
    </alternativeName>
</protein>
<proteinExistence type="evidence at transcript level"/>
<sequence>METATLVAIFISGLLVSFTGYALYTAFGQPSQQLRDPFEEHGD</sequence>
<keyword id="KW-0150">Chloroplast</keyword>
<keyword id="KW-0472">Membrane</keyword>
<keyword id="KW-0934">Plastid</keyword>
<keyword id="KW-1185">Reference proteome</keyword>
<keyword id="KW-0793">Thylakoid</keyword>
<keyword id="KW-0812">Transmembrane</keyword>
<keyword id="KW-1133">Transmembrane helix</keyword>
<evidence type="ECO:0000255" key="1">
    <source>
        <dbReference type="HAMAP-Rule" id="MF_00293"/>
    </source>
</evidence>
<evidence type="ECO:0000269" key="2">
    <source>
    </source>
</evidence>
<evidence type="ECO:0000303" key="3">
    <source>
    </source>
</evidence>
<organism>
    <name type="scientific">Nicotiana tabacum</name>
    <name type="common">Common tobacco</name>
    <dbReference type="NCBI Taxonomy" id="4097"/>
    <lineage>
        <taxon>Eukaryota</taxon>
        <taxon>Viridiplantae</taxon>
        <taxon>Streptophyta</taxon>
        <taxon>Embryophyta</taxon>
        <taxon>Tracheophyta</taxon>
        <taxon>Spermatophyta</taxon>
        <taxon>Magnoliopsida</taxon>
        <taxon>eudicotyledons</taxon>
        <taxon>Gunneridae</taxon>
        <taxon>Pentapetalae</taxon>
        <taxon>asterids</taxon>
        <taxon>lamiids</taxon>
        <taxon>Solanales</taxon>
        <taxon>Solanaceae</taxon>
        <taxon>Nicotianoideae</taxon>
        <taxon>Nicotianeae</taxon>
        <taxon>Nicotiana</taxon>
    </lineage>
</organism>
<geneLocation type="chloroplast"/>
<gene>
    <name evidence="3" type="primary">pbf1</name>
    <name type="synonym">orf43</name>
    <name evidence="1" type="synonym">psbN</name>
</gene>
<feature type="chain" id="PRO_0000207966" description="Photosystem biogenesis factor 1">
    <location>
        <begin position="1"/>
        <end position="43"/>
    </location>
</feature>
<feature type="transmembrane region" description="Helical" evidence="1">
    <location>
        <begin position="7"/>
        <end position="27"/>
    </location>
</feature>
<comment type="function">
    <text evidence="1 2">May play a role in photosystem I and II biogenesis.</text>
</comment>
<comment type="subcellular location">
    <subcellularLocation>
        <location evidence="1">Plastid</location>
        <location evidence="1">Chloroplast thylakoid membrane</location>
        <topology evidence="1">Single-pass membrane protein</topology>
    </subcellularLocation>
</comment>
<comment type="induction">
    <text evidence="2">Expressed in leaves; transcribed from the opposite strand from the psbB-psbT-psbH-petB-petD operon, it is found in the antisense region between psbT and psbH.</text>
</comment>
<comment type="disruption phenotype">
    <text evidence="2">When grown photoautotrophically on soil is highly light-sensitive with extremely slow growth and pigment deficiency; on sucrose-containing medium under low-light grows like wild-type. Strongly impaired photosynthesis; both PSI and PSII levels are decreased.</text>
</comment>
<comment type="similarity">
    <text evidence="1">Belongs to the PsbN family.</text>
</comment>
<comment type="caution">
    <text evidence="1 2">Originally thought to be a component of PSII; based on experiments in this organism, Synechocystis and barley, and its absence from PSII in T.elongatus and T.vulcanus, this is probably not true.</text>
</comment>
<name>PSBN_TOBAC</name>
<reference key="1">
    <citation type="journal article" date="1986" name="EMBO J.">
        <title>The complete nucleotide sequence of the tobacco chloroplast genome: its gene organization and expression.</title>
        <authorList>
            <person name="Shinozaki K."/>
            <person name="Ohme M."/>
            <person name="Tanaka M."/>
            <person name="Wakasugi T."/>
            <person name="Hayashida N."/>
            <person name="Matsubayashi T."/>
            <person name="Zaita N."/>
            <person name="Chunwongse J."/>
            <person name="Obokata J."/>
            <person name="Yamaguchi-Shinozaki K."/>
            <person name="Ohto C."/>
            <person name="Torazawa K."/>
            <person name="Meng B.-Y."/>
            <person name="Sugita M."/>
            <person name="Deno H."/>
            <person name="Kamogashira T."/>
            <person name="Yamada K."/>
            <person name="Kusuda J."/>
            <person name="Takaiwa F."/>
            <person name="Kato A."/>
            <person name="Tohdoh N."/>
            <person name="Shimada H."/>
            <person name="Sugiura M."/>
        </authorList>
    </citation>
    <scope>NUCLEOTIDE SEQUENCE [LARGE SCALE GENOMIC DNA]</scope>
    <source>
        <strain>cv. Bright Yellow 4</strain>
    </source>
</reference>
<reference key="2">
    <citation type="journal article" date="2013" name="Plant J.">
        <title>Reverse genetics in complex multigene operons by co-transformation of the plastid genome and its application to the open reading frame previously designated psbN.</title>
        <authorList>
            <person name="Krech K."/>
            <person name="Fu H.Y."/>
            <person name="Thiele W."/>
            <person name="Ruf S."/>
            <person name="Schoettler M.A."/>
            <person name="Bock R."/>
        </authorList>
    </citation>
    <scope>FUNCTION</scope>
    <scope>INDUCTION</scope>
    <scope>DISRUPTION PHENOTYPE</scope>
    <source>
        <strain>cv. Petit Havana</strain>
    </source>
</reference>
<dbReference type="EMBL" id="Z00044">
    <property type="protein sequence ID" value="CAA77424.1"/>
    <property type="molecule type" value="Genomic_DNA"/>
</dbReference>
<dbReference type="RefSeq" id="NP_054528.1">
    <property type="nucleotide sequence ID" value="NC_001879.2"/>
</dbReference>
<dbReference type="SMR" id="P62114"/>
<dbReference type="GeneID" id="800457"/>
<dbReference type="KEGG" id="nta:800457"/>
<dbReference type="OrthoDB" id="1860403at2759"/>
<dbReference type="Proteomes" id="UP000084051">
    <property type="component" value="Unplaced"/>
</dbReference>
<dbReference type="GO" id="GO:0009535">
    <property type="term" value="C:chloroplast thylakoid membrane"/>
    <property type="evidence" value="ECO:0007669"/>
    <property type="project" value="UniProtKB-SubCell"/>
</dbReference>
<dbReference type="GO" id="GO:0015979">
    <property type="term" value="P:photosynthesis"/>
    <property type="evidence" value="ECO:0007669"/>
    <property type="project" value="InterPro"/>
</dbReference>
<dbReference type="HAMAP" id="MF_00293">
    <property type="entry name" value="PSII_PsbN"/>
    <property type="match status" value="1"/>
</dbReference>
<dbReference type="InterPro" id="IPR003398">
    <property type="entry name" value="PSII_PsbN"/>
</dbReference>
<dbReference type="PANTHER" id="PTHR35326">
    <property type="entry name" value="PROTEIN PSBN"/>
    <property type="match status" value="1"/>
</dbReference>
<dbReference type="PANTHER" id="PTHR35326:SF3">
    <property type="entry name" value="PROTEIN PSBN"/>
    <property type="match status" value="1"/>
</dbReference>
<dbReference type="Pfam" id="PF02468">
    <property type="entry name" value="PsbN"/>
    <property type="match status" value="1"/>
</dbReference>